<proteinExistence type="evidence at transcript level"/>
<accession>S0EGU4</accession>
<comment type="function">
    <text evidence="6">ABC transporter; part of the gene cluster that mediates the biosynthesis of beauvericin (BEA), a non-ribosomal cyclic hexadepsipeptide that shows antibiotic, antifungal, insecticidal, and cancer cell antiproliferative and antihaptotactic activity (PubMed:27750383). Functions as a regulator of beauvericin production, rather than in BEA transport out of the cell (PubMed:27750383). Beauvericin has low toxicity to the producing fungus and BEA3 does not play a role in detoxification and self-protection of the producing fungus (PubMed:27750383).</text>
</comment>
<comment type="subcellular location">
    <subcellularLocation>
        <location evidence="6">Cell membrane</location>
        <topology evidence="1">Multi-pass membrane protein</topology>
    </subcellularLocation>
</comment>
<comment type="induction">
    <text evidence="6">Expression is highly repressed by the histone deacetylase HDA1 and the beauvericin cluster-specific repressor BEA4 (PubMed:27750383). BEA biosynthesis is also repressed by the activity of the H3K27 methyltransferase KMT6 (PubMed:27750383).</text>
</comment>
<comment type="disruption phenotype">
    <text evidence="6">Does not affect the production of beauvericin but increases the expression of BEA1 and BEA2 (PubMed:27750383).</text>
</comment>
<comment type="similarity">
    <text evidence="8">Belongs to the ABC transporter superfamily. ABCB family. Multidrug resistance exporter (TC 3.A.1.201) subfamily.</text>
</comment>
<sequence>MGKRTAENSAANGEGEEKHPEIGVDGRPEKEPTFQDYMRVFKYASKWDLLAYTVGVIASIGVGITLPLLNIVFGQFASKFSDYAGTETLPGDEFRSKLSELCLYLLGLFLGRLVLGYITNFAFRMTGVRITSAIRQDYFTALFSQSVHVLDSMPPGYATTIITTTGNTLQLGISEKLGVFVEYNATMIASIIVAFIYSWQLSLVTFTAVVFITFSVSLVLPYITKGQTNQTKSEAMAMSVASEAMSGIRMIVAYGAESRIGSKYGRFVDEAKKHAQFAGPFIALQYGLVFFSSYAAFGLAFWYGTRLLLEDKINQLGAIIVVLFSVMMIVTAMERISTPLLAVSKATVAACEFFTVIDAPRPEPGHLTDPDVSATEDIILEDVTFAYPSRPHVKILDNLNLRIETGKVTAIVGPSGSGKSTIVGLVERWYGLKDQYVISKPVEKPTDKKNNGGKEEDEQELQELSFAGDETGPPVDLHGRISTCGHSLDDINVKWWRSQIGLVQQEPFLFNDTIYSNVLNGLIGTKWENEPDEKKREMVHEACKEAFADEFIEKLPEGYNTAVGEVGIKLSGGQRQRIAIARAIIRRPAILILDEATSAIDVRGERIVQAALDRASKNRTTIVIAHRLSTIKKADRIVVLRQGQVIQSGTHEGLLTDEAGLYYNLVNAQALSLGEQKEGNEVIAKEERPSSVHEKAHTESTIEEKPLEKKPKNKGLLSSFGRFFYETKSNWWMMALTLFFSACAGAAVPFQAWLFAKVIIVFGYLPDESKVRSESSFWSLMWTVLAISAGLAYCATFFLSTRTASTIRAKYQKQYFLYILHQKVAFFDHDDHSQGTMAARSAEDPRQLEELLGSNMASVFIALWTLMGTIAIALAFAWKLALVSLCVVVPILLAAGYWRMRYEIKFEEMNNAVFVDSSKFASEAIGAFRTVASFTLEVAICDQFRTLNSNHVKDAFKKARWVSLLYAFSDSATIGCQAIVLYYGGRLLLSGEYDLESFFVCFMSVLNAGETTGRALSFGPNVAQVRAAANRILGLRDSQVKDGPEATGEQFISHGDGIEIELENIYFKYPTRDVPVFDGLSLTIEKGQFAALVGASGSGKSSIVSLLERFYDPDHGRILCNGQDIATNNVYTYRRHLSLVAQESSLFQGTLRENILLGVEDTVDDAAVHRVCQEASIHEFIMSLPEGYQTQVGSRGVTLSGGQRQRVAIARALMRNPDILLLDEATSSLDSESEKLVQEAFERAGKGRTMVVVAHRLATVQNADVIFVLGEGKLIEKGSHRELLAARGVYWQMCQSQALDK</sequence>
<gene>
    <name evidence="7" type="primary">BEA3</name>
    <name type="ORF">FFUJ_09294</name>
</gene>
<reference key="1">
    <citation type="journal article" date="2013" name="PLoS Pathog.">
        <title>Deciphering the cryptic genome: genome-wide analyses of the rice pathogen Fusarium fujikuroi reveal complex regulation of secondary metabolism and novel metabolites.</title>
        <authorList>
            <person name="Wiemann P."/>
            <person name="Sieber C.M.K."/>
            <person name="von Bargen K.W."/>
            <person name="Studt L."/>
            <person name="Niehaus E.-M."/>
            <person name="Espino J.J."/>
            <person name="Huss K."/>
            <person name="Michielse C.B."/>
            <person name="Albermann S."/>
            <person name="Wagner D."/>
            <person name="Bergner S.V."/>
            <person name="Connolly L.R."/>
            <person name="Fischer A."/>
            <person name="Reuter G."/>
            <person name="Kleigrewe K."/>
            <person name="Bald T."/>
            <person name="Wingfield B.D."/>
            <person name="Ophir R."/>
            <person name="Freeman S."/>
            <person name="Hippler M."/>
            <person name="Smith K.M."/>
            <person name="Brown D.W."/>
            <person name="Proctor R.H."/>
            <person name="Muensterkoetter M."/>
            <person name="Freitag M."/>
            <person name="Humpf H.-U."/>
            <person name="Gueldener U."/>
            <person name="Tudzynski B."/>
        </authorList>
    </citation>
    <scope>NUCLEOTIDE SEQUENCE [LARGE SCALE GENOMIC DNA]</scope>
    <source>
        <strain>CBS 195.34 / IMI 58289 / NRRL A-6831</strain>
    </source>
</reference>
<reference key="2">
    <citation type="journal article" date="2016" name="Environ. Microbiol.">
        <title>Sound of silence: the beauvericin cluster in Fusarium fujikuroi is controlled by cluster-specific and global regulators mediated by H3K27 modification.</title>
        <authorList>
            <person name="Niehaus E.M."/>
            <person name="Studt L."/>
            <person name="von Bargen K.W."/>
            <person name="Kummer W."/>
            <person name="Humpf H.U."/>
            <person name="Reuter G."/>
            <person name="Tudzynski B."/>
        </authorList>
    </citation>
    <scope>FUNCTION</scope>
    <scope>INDUCTION</scope>
    <scope>DISRUPTION PHENOTYPE</scope>
    <scope>SUBCELLULAR LOCATION</scope>
</reference>
<name>BEA3_GIBF5</name>
<feature type="chain" id="PRO_0000442148" description="ABC transporter BEA3">
    <location>
        <begin position="1"/>
        <end position="1301"/>
    </location>
</feature>
<feature type="transmembrane region" description="Helical" evidence="1 3">
    <location>
        <begin position="54"/>
        <end position="74"/>
    </location>
</feature>
<feature type="transmembrane region" description="Helical" evidence="1 3">
    <location>
        <begin position="103"/>
        <end position="123"/>
    </location>
</feature>
<feature type="transmembrane region" description="Helical" evidence="1 3">
    <location>
        <begin position="177"/>
        <end position="197"/>
    </location>
</feature>
<feature type="transmembrane region" description="Helical" evidence="1 3">
    <location>
        <begin position="203"/>
        <end position="223"/>
    </location>
</feature>
<feature type="transmembrane region" description="Helical" evidence="1 3">
    <location>
        <begin position="281"/>
        <end position="301"/>
    </location>
</feature>
<feature type="transmembrane region" description="Helical" evidence="1 3">
    <location>
        <begin position="313"/>
        <end position="333"/>
    </location>
</feature>
<feature type="transmembrane region" description="Helical" evidence="1 3">
    <location>
        <begin position="745"/>
        <end position="765"/>
    </location>
</feature>
<feature type="transmembrane region" description="Helical" evidence="1 3">
    <location>
        <begin position="779"/>
        <end position="799"/>
    </location>
</feature>
<feature type="transmembrane region" description="Helical" evidence="1 3">
    <location>
        <begin position="858"/>
        <end position="878"/>
    </location>
</feature>
<feature type="transmembrane region" description="Helical" evidence="1 3">
    <location>
        <begin position="880"/>
        <end position="900"/>
    </location>
</feature>
<feature type="transmembrane region" description="Helical" evidence="1 3">
    <location>
        <begin position="961"/>
        <end position="981"/>
    </location>
</feature>
<feature type="transmembrane region" description="Helical" evidence="1 3">
    <location>
        <begin position="987"/>
        <end position="1007"/>
    </location>
</feature>
<feature type="domain" description="ABC transmembrane type-1 1" evidence="3">
    <location>
        <begin position="54"/>
        <end position="345"/>
    </location>
</feature>
<feature type="domain" description="ABC transporter 1" evidence="2">
    <location>
        <begin position="378"/>
        <end position="667"/>
    </location>
</feature>
<feature type="domain" description="ABC transmembrane type-1 2" evidence="3">
    <location>
        <begin position="735"/>
        <end position="1024"/>
    </location>
</feature>
<feature type="domain" description="ABC transporter 2" evidence="2">
    <location>
        <begin position="1060"/>
        <end position="1296"/>
    </location>
</feature>
<feature type="region of interest" description="Disordered" evidence="5">
    <location>
        <begin position="1"/>
        <end position="30"/>
    </location>
</feature>
<feature type="region of interest" description="Disordered" evidence="5">
    <location>
        <begin position="442"/>
        <end position="461"/>
    </location>
</feature>
<feature type="region of interest" description="Disordered" evidence="5">
    <location>
        <begin position="682"/>
        <end position="708"/>
    </location>
</feature>
<feature type="compositionally biased region" description="Basic and acidic residues" evidence="5">
    <location>
        <begin position="15"/>
        <end position="30"/>
    </location>
</feature>
<feature type="compositionally biased region" description="Basic and acidic residues" evidence="5">
    <location>
        <begin position="442"/>
        <end position="454"/>
    </location>
</feature>
<feature type="binding site" evidence="2">
    <location>
        <begin position="413"/>
        <end position="420"/>
    </location>
    <ligand>
        <name>ATP</name>
        <dbReference type="ChEBI" id="CHEBI:30616"/>
    </ligand>
</feature>
<feature type="binding site" evidence="2">
    <location>
        <begin position="1094"/>
        <end position="1101"/>
    </location>
    <ligand>
        <name>ATP</name>
        <dbReference type="ChEBI" id="CHEBI:30616"/>
    </ligand>
</feature>
<feature type="glycosylation site" description="N-linked (GlcNAc...) asparagine" evidence="4">
    <location>
        <position position="229"/>
    </location>
</feature>
<feature type="glycosylation site" description="N-linked (GlcNAc...) asparagine" evidence="4">
    <location>
        <position position="511"/>
    </location>
</feature>
<feature type="glycosylation site" description="N-linked (GlcNAc...) asparagine" evidence="4">
    <location>
        <position position="618"/>
    </location>
</feature>
<organism>
    <name type="scientific">Gibberella fujikuroi (strain CBS 195.34 / IMI 58289 / NRRL A-6831)</name>
    <name type="common">Bakanae and foot rot disease fungus</name>
    <name type="synonym">Fusarium fujikuroi</name>
    <dbReference type="NCBI Taxonomy" id="1279085"/>
    <lineage>
        <taxon>Eukaryota</taxon>
        <taxon>Fungi</taxon>
        <taxon>Dikarya</taxon>
        <taxon>Ascomycota</taxon>
        <taxon>Pezizomycotina</taxon>
        <taxon>Sordariomycetes</taxon>
        <taxon>Hypocreomycetidae</taxon>
        <taxon>Hypocreales</taxon>
        <taxon>Nectriaceae</taxon>
        <taxon>Fusarium</taxon>
        <taxon>Fusarium fujikuroi species complex</taxon>
    </lineage>
</organism>
<protein>
    <recommendedName>
        <fullName evidence="7">ABC transporter BEA3</fullName>
    </recommendedName>
    <alternativeName>
        <fullName evidence="7">Beauvericin biosynthesis cluster protein 3</fullName>
    </alternativeName>
</protein>
<evidence type="ECO:0000255" key="1"/>
<evidence type="ECO:0000255" key="2">
    <source>
        <dbReference type="PROSITE-ProRule" id="PRU00434"/>
    </source>
</evidence>
<evidence type="ECO:0000255" key="3">
    <source>
        <dbReference type="PROSITE-ProRule" id="PRU00441"/>
    </source>
</evidence>
<evidence type="ECO:0000255" key="4">
    <source>
        <dbReference type="PROSITE-ProRule" id="PRU00498"/>
    </source>
</evidence>
<evidence type="ECO:0000256" key="5">
    <source>
        <dbReference type="SAM" id="MobiDB-lite"/>
    </source>
</evidence>
<evidence type="ECO:0000269" key="6">
    <source>
    </source>
</evidence>
<evidence type="ECO:0000303" key="7">
    <source>
    </source>
</evidence>
<evidence type="ECO:0000305" key="8"/>
<dbReference type="EMBL" id="HF679031">
    <property type="protein sequence ID" value="CCT73880.1"/>
    <property type="molecule type" value="Genomic_DNA"/>
</dbReference>
<dbReference type="SMR" id="S0EGU4"/>
<dbReference type="STRING" id="1279085.S0EGU4"/>
<dbReference type="GlyCosmos" id="S0EGU4">
    <property type="glycosylation" value="3 sites, No reported glycans"/>
</dbReference>
<dbReference type="EnsemblFungi" id="CCT73880">
    <property type="protein sequence ID" value="CCT73880"/>
    <property type="gene ID" value="FFUJ_09294"/>
</dbReference>
<dbReference type="VEuPathDB" id="FungiDB:FFUJ_09294"/>
<dbReference type="HOGENOM" id="CLU_000604_17_2_1"/>
<dbReference type="Proteomes" id="UP000016800">
    <property type="component" value="Chromosome 9"/>
</dbReference>
<dbReference type="GO" id="GO:0005743">
    <property type="term" value="C:mitochondrial inner membrane"/>
    <property type="evidence" value="ECO:0007669"/>
    <property type="project" value="TreeGrafter"/>
</dbReference>
<dbReference type="GO" id="GO:0005886">
    <property type="term" value="C:plasma membrane"/>
    <property type="evidence" value="ECO:0007669"/>
    <property type="project" value="UniProtKB-SubCell"/>
</dbReference>
<dbReference type="GO" id="GO:0015421">
    <property type="term" value="F:ABC-type oligopeptide transporter activity"/>
    <property type="evidence" value="ECO:0007669"/>
    <property type="project" value="TreeGrafter"/>
</dbReference>
<dbReference type="GO" id="GO:0005524">
    <property type="term" value="F:ATP binding"/>
    <property type="evidence" value="ECO:0007669"/>
    <property type="project" value="UniProtKB-KW"/>
</dbReference>
<dbReference type="GO" id="GO:0016887">
    <property type="term" value="F:ATP hydrolysis activity"/>
    <property type="evidence" value="ECO:0007669"/>
    <property type="project" value="InterPro"/>
</dbReference>
<dbReference type="GO" id="GO:0090374">
    <property type="term" value="P:oligopeptide export from mitochondrion"/>
    <property type="evidence" value="ECO:0007669"/>
    <property type="project" value="TreeGrafter"/>
</dbReference>
<dbReference type="CDD" id="cd18577">
    <property type="entry name" value="ABC_6TM_Pgp_ABCB1_D1_like"/>
    <property type="match status" value="1"/>
</dbReference>
<dbReference type="CDD" id="cd18578">
    <property type="entry name" value="ABC_6TM_Pgp_ABCB1_D2_like"/>
    <property type="match status" value="1"/>
</dbReference>
<dbReference type="CDD" id="cd03249">
    <property type="entry name" value="ABC_MTABC3_MDL1_MDL2"/>
    <property type="match status" value="1"/>
</dbReference>
<dbReference type="FunFam" id="3.40.50.300:FF:000913">
    <property type="entry name" value="ABC multidrug transporter SitT"/>
    <property type="match status" value="1"/>
</dbReference>
<dbReference type="Gene3D" id="1.20.1560.10">
    <property type="entry name" value="ABC transporter type 1, transmembrane domain"/>
    <property type="match status" value="1"/>
</dbReference>
<dbReference type="Gene3D" id="3.40.50.300">
    <property type="entry name" value="P-loop containing nucleotide triphosphate hydrolases"/>
    <property type="match status" value="2"/>
</dbReference>
<dbReference type="InterPro" id="IPR003593">
    <property type="entry name" value="AAA+_ATPase"/>
</dbReference>
<dbReference type="InterPro" id="IPR011527">
    <property type="entry name" value="ABC1_TM_dom"/>
</dbReference>
<dbReference type="InterPro" id="IPR036640">
    <property type="entry name" value="ABC1_TM_sf"/>
</dbReference>
<dbReference type="InterPro" id="IPR003439">
    <property type="entry name" value="ABC_transporter-like_ATP-bd"/>
</dbReference>
<dbReference type="InterPro" id="IPR017871">
    <property type="entry name" value="ABC_transporter-like_CS"/>
</dbReference>
<dbReference type="InterPro" id="IPR027417">
    <property type="entry name" value="P-loop_NTPase"/>
</dbReference>
<dbReference type="InterPro" id="IPR039421">
    <property type="entry name" value="Type_1_exporter"/>
</dbReference>
<dbReference type="PANTHER" id="PTHR43394">
    <property type="entry name" value="ATP-DEPENDENT PERMEASE MDL1, MITOCHONDRIAL"/>
    <property type="match status" value="1"/>
</dbReference>
<dbReference type="PANTHER" id="PTHR43394:SF27">
    <property type="entry name" value="ATP-DEPENDENT TRANSLOCASE ABCB1-LIKE"/>
    <property type="match status" value="1"/>
</dbReference>
<dbReference type="Pfam" id="PF00664">
    <property type="entry name" value="ABC_membrane"/>
    <property type="match status" value="2"/>
</dbReference>
<dbReference type="Pfam" id="PF00005">
    <property type="entry name" value="ABC_tran"/>
    <property type="match status" value="3"/>
</dbReference>
<dbReference type="SMART" id="SM00382">
    <property type="entry name" value="AAA"/>
    <property type="match status" value="2"/>
</dbReference>
<dbReference type="SUPFAM" id="SSF90123">
    <property type="entry name" value="ABC transporter transmembrane region"/>
    <property type="match status" value="2"/>
</dbReference>
<dbReference type="SUPFAM" id="SSF52540">
    <property type="entry name" value="P-loop containing nucleoside triphosphate hydrolases"/>
    <property type="match status" value="3"/>
</dbReference>
<dbReference type="PROSITE" id="PS50929">
    <property type="entry name" value="ABC_TM1F"/>
    <property type="match status" value="2"/>
</dbReference>
<dbReference type="PROSITE" id="PS00211">
    <property type="entry name" value="ABC_TRANSPORTER_1"/>
    <property type="match status" value="2"/>
</dbReference>
<dbReference type="PROSITE" id="PS50893">
    <property type="entry name" value="ABC_TRANSPORTER_2"/>
    <property type="match status" value="2"/>
</dbReference>
<keyword id="KW-0067">ATP-binding</keyword>
<keyword id="KW-1003">Cell membrane</keyword>
<keyword id="KW-0325">Glycoprotein</keyword>
<keyword id="KW-0472">Membrane</keyword>
<keyword id="KW-0547">Nucleotide-binding</keyword>
<keyword id="KW-1185">Reference proteome</keyword>
<keyword id="KW-0677">Repeat</keyword>
<keyword id="KW-0812">Transmembrane</keyword>
<keyword id="KW-1133">Transmembrane helix</keyword>
<keyword id="KW-0813">Transport</keyword>